<name>HEM1_BREBN</name>
<gene>
    <name evidence="1" type="primary">hemA</name>
    <name type="ordered locus">BBR47_18010</name>
</gene>
<comment type="function">
    <text evidence="1">Catalyzes the NADPH-dependent reduction of glutamyl-tRNA(Glu) to glutamate 1-semialdehyde (GSA).</text>
</comment>
<comment type="catalytic activity">
    <reaction evidence="1">
        <text>(S)-4-amino-5-oxopentanoate + tRNA(Glu) + NADP(+) = L-glutamyl-tRNA(Glu) + NADPH + H(+)</text>
        <dbReference type="Rhea" id="RHEA:12344"/>
        <dbReference type="Rhea" id="RHEA-COMP:9663"/>
        <dbReference type="Rhea" id="RHEA-COMP:9680"/>
        <dbReference type="ChEBI" id="CHEBI:15378"/>
        <dbReference type="ChEBI" id="CHEBI:57501"/>
        <dbReference type="ChEBI" id="CHEBI:57783"/>
        <dbReference type="ChEBI" id="CHEBI:58349"/>
        <dbReference type="ChEBI" id="CHEBI:78442"/>
        <dbReference type="ChEBI" id="CHEBI:78520"/>
        <dbReference type="EC" id="1.2.1.70"/>
    </reaction>
</comment>
<comment type="pathway">
    <text evidence="1">Porphyrin-containing compound metabolism; protoporphyrin-IX biosynthesis; 5-aminolevulinate from L-glutamyl-tRNA(Glu): step 1/2.</text>
</comment>
<comment type="subunit">
    <text evidence="1">Homodimer.</text>
</comment>
<comment type="domain">
    <text evidence="1">Possesses an unusual extended V-shaped dimeric structure with each monomer consisting of three distinct domains arranged along a curved 'spinal' alpha-helix. The N-terminal catalytic domain specifically recognizes the glutamate moiety of the substrate. The second domain is the NADPH-binding domain, and the third C-terminal domain is responsible for dimerization.</text>
</comment>
<comment type="miscellaneous">
    <text evidence="1">During catalysis, the active site Cys acts as a nucleophile attacking the alpha-carbonyl group of tRNA-bound glutamate with the formation of a thioester intermediate between enzyme and glutamate, and the concomitant release of tRNA(Glu). The thioester intermediate is finally reduced by direct hydride transfer from NADPH, to form the product GSA.</text>
</comment>
<comment type="similarity">
    <text evidence="1">Belongs to the glutamyl-tRNA reductase family.</text>
</comment>
<accession>C0ZAG9</accession>
<keyword id="KW-0521">NADP</keyword>
<keyword id="KW-0560">Oxidoreductase</keyword>
<keyword id="KW-0627">Porphyrin biosynthesis</keyword>
<keyword id="KW-1185">Reference proteome</keyword>
<proteinExistence type="inferred from homology"/>
<reference key="1">
    <citation type="submission" date="2005-03" db="EMBL/GenBank/DDBJ databases">
        <title>Brevibacillus brevis strain 47, complete genome.</title>
        <authorList>
            <person name="Hosoyama A."/>
            <person name="Yamada R."/>
            <person name="Hongo Y."/>
            <person name="Terui Y."/>
            <person name="Ankai A."/>
            <person name="Masuyama W."/>
            <person name="Sekiguchi M."/>
            <person name="Takeda T."/>
            <person name="Asano K."/>
            <person name="Ohji S."/>
            <person name="Ichikawa N."/>
            <person name="Narita S."/>
            <person name="Aoki N."/>
            <person name="Miura H."/>
            <person name="Matsushita S."/>
            <person name="Sekigawa T."/>
            <person name="Yamagata H."/>
            <person name="Yoshikawa H."/>
            <person name="Udaka S."/>
            <person name="Tanikawa S."/>
            <person name="Fujita N."/>
        </authorList>
    </citation>
    <scope>NUCLEOTIDE SEQUENCE [LARGE SCALE GENOMIC DNA]</scope>
    <source>
        <strain>47 / JCM 6285 / NBRC 100599</strain>
    </source>
</reference>
<protein>
    <recommendedName>
        <fullName evidence="1">Glutamyl-tRNA reductase</fullName>
        <shortName evidence="1">GluTR</shortName>
        <ecNumber evidence="1">1.2.1.70</ecNumber>
    </recommendedName>
</protein>
<feature type="chain" id="PRO_1000190509" description="Glutamyl-tRNA reductase">
    <location>
        <begin position="1"/>
        <end position="454"/>
    </location>
</feature>
<feature type="region of interest" description="Disordered" evidence="2">
    <location>
        <begin position="434"/>
        <end position="454"/>
    </location>
</feature>
<feature type="active site" description="Nucleophile" evidence="1">
    <location>
        <position position="50"/>
    </location>
</feature>
<feature type="binding site" evidence="1">
    <location>
        <begin position="49"/>
        <end position="52"/>
    </location>
    <ligand>
        <name>substrate</name>
    </ligand>
</feature>
<feature type="binding site" evidence="1">
    <location>
        <position position="109"/>
    </location>
    <ligand>
        <name>substrate</name>
    </ligand>
</feature>
<feature type="binding site" evidence="1">
    <location>
        <begin position="114"/>
        <end position="116"/>
    </location>
    <ligand>
        <name>substrate</name>
    </ligand>
</feature>
<feature type="binding site" evidence="1">
    <location>
        <position position="120"/>
    </location>
    <ligand>
        <name>substrate</name>
    </ligand>
</feature>
<feature type="binding site" evidence="1">
    <location>
        <begin position="189"/>
        <end position="194"/>
    </location>
    <ligand>
        <name>NADP(+)</name>
        <dbReference type="ChEBI" id="CHEBI:58349"/>
    </ligand>
</feature>
<feature type="site" description="Important for activity" evidence="1">
    <location>
        <position position="99"/>
    </location>
</feature>
<organism>
    <name type="scientific">Brevibacillus brevis (strain 47 / JCM 6285 / NBRC 100599)</name>
    <dbReference type="NCBI Taxonomy" id="358681"/>
    <lineage>
        <taxon>Bacteria</taxon>
        <taxon>Bacillati</taxon>
        <taxon>Bacillota</taxon>
        <taxon>Bacilli</taxon>
        <taxon>Bacillales</taxon>
        <taxon>Paenibacillaceae</taxon>
        <taxon>Brevibacillus</taxon>
    </lineage>
</organism>
<evidence type="ECO:0000255" key="1">
    <source>
        <dbReference type="HAMAP-Rule" id="MF_00087"/>
    </source>
</evidence>
<evidence type="ECO:0000256" key="2">
    <source>
        <dbReference type="SAM" id="MobiDB-lite"/>
    </source>
</evidence>
<dbReference type="EC" id="1.2.1.70" evidence="1"/>
<dbReference type="EMBL" id="AP008955">
    <property type="protein sequence ID" value="BAH42778.1"/>
    <property type="molecule type" value="Genomic_DNA"/>
</dbReference>
<dbReference type="RefSeq" id="WP_012685521.1">
    <property type="nucleotide sequence ID" value="NC_012491.1"/>
</dbReference>
<dbReference type="SMR" id="C0ZAG9"/>
<dbReference type="STRING" id="358681.BBR47_18010"/>
<dbReference type="KEGG" id="bbe:BBR47_18010"/>
<dbReference type="eggNOG" id="COG0373">
    <property type="taxonomic scope" value="Bacteria"/>
</dbReference>
<dbReference type="HOGENOM" id="CLU_035113_2_2_9"/>
<dbReference type="UniPathway" id="UPA00251">
    <property type="reaction ID" value="UER00316"/>
</dbReference>
<dbReference type="Proteomes" id="UP000001877">
    <property type="component" value="Chromosome"/>
</dbReference>
<dbReference type="GO" id="GO:0008883">
    <property type="term" value="F:glutamyl-tRNA reductase activity"/>
    <property type="evidence" value="ECO:0007669"/>
    <property type="project" value="UniProtKB-UniRule"/>
</dbReference>
<dbReference type="GO" id="GO:0050661">
    <property type="term" value="F:NADP binding"/>
    <property type="evidence" value="ECO:0007669"/>
    <property type="project" value="InterPro"/>
</dbReference>
<dbReference type="GO" id="GO:0019353">
    <property type="term" value="P:protoporphyrinogen IX biosynthetic process from glutamate"/>
    <property type="evidence" value="ECO:0007669"/>
    <property type="project" value="TreeGrafter"/>
</dbReference>
<dbReference type="CDD" id="cd05213">
    <property type="entry name" value="NAD_bind_Glutamyl_tRNA_reduct"/>
    <property type="match status" value="1"/>
</dbReference>
<dbReference type="FunFam" id="3.30.460.30:FF:000001">
    <property type="entry name" value="Glutamyl-tRNA reductase"/>
    <property type="match status" value="1"/>
</dbReference>
<dbReference type="FunFam" id="3.40.50.720:FF:000031">
    <property type="entry name" value="Glutamyl-tRNA reductase"/>
    <property type="match status" value="1"/>
</dbReference>
<dbReference type="Gene3D" id="3.30.460.30">
    <property type="entry name" value="Glutamyl-tRNA reductase, N-terminal domain"/>
    <property type="match status" value="1"/>
</dbReference>
<dbReference type="Gene3D" id="3.40.50.720">
    <property type="entry name" value="NAD(P)-binding Rossmann-like Domain"/>
    <property type="match status" value="1"/>
</dbReference>
<dbReference type="HAMAP" id="MF_00087">
    <property type="entry name" value="Glu_tRNA_reductase"/>
    <property type="match status" value="1"/>
</dbReference>
<dbReference type="InterPro" id="IPR000343">
    <property type="entry name" value="4pyrrol_synth_GluRdtase"/>
</dbReference>
<dbReference type="InterPro" id="IPR015896">
    <property type="entry name" value="4pyrrol_synth_GluRdtase_dimer"/>
</dbReference>
<dbReference type="InterPro" id="IPR015895">
    <property type="entry name" value="4pyrrol_synth_GluRdtase_N"/>
</dbReference>
<dbReference type="InterPro" id="IPR018214">
    <property type="entry name" value="GluRdtase_CS"/>
</dbReference>
<dbReference type="InterPro" id="IPR036453">
    <property type="entry name" value="GluRdtase_dimer_dom_sf"/>
</dbReference>
<dbReference type="InterPro" id="IPR036343">
    <property type="entry name" value="GluRdtase_N_sf"/>
</dbReference>
<dbReference type="InterPro" id="IPR036291">
    <property type="entry name" value="NAD(P)-bd_dom_sf"/>
</dbReference>
<dbReference type="InterPro" id="IPR006151">
    <property type="entry name" value="Shikm_DH/Glu-tRNA_Rdtase"/>
</dbReference>
<dbReference type="NCBIfam" id="TIGR01035">
    <property type="entry name" value="hemA"/>
    <property type="match status" value="1"/>
</dbReference>
<dbReference type="NCBIfam" id="NF000744">
    <property type="entry name" value="PRK00045.1-3"/>
    <property type="match status" value="1"/>
</dbReference>
<dbReference type="PANTHER" id="PTHR43013">
    <property type="entry name" value="GLUTAMYL-TRNA REDUCTASE"/>
    <property type="match status" value="1"/>
</dbReference>
<dbReference type="PANTHER" id="PTHR43013:SF1">
    <property type="entry name" value="GLUTAMYL-TRNA REDUCTASE"/>
    <property type="match status" value="1"/>
</dbReference>
<dbReference type="Pfam" id="PF00745">
    <property type="entry name" value="GlutR_dimer"/>
    <property type="match status" value="1"/>
</dbReference>
<dbReference type="Pfam" id="PF05201">
    <property type="entry name" value="GlutR_N"/>
    <property type="match status" value="1"/>
</dbReference>
<dbReference type="Pfam" id="PF01488">
    <property type="entry name" value="Shikimate_DH"/>
    <property type="match status" value="1"/>
</dbReference>
<dbReference type="PIRSF" id="PIRSF000445">
    <property type="entry name" value="4pyrrol_synth_GluRdtase"/>
    <property type="match status" value="1"/>
</dbReference>
<dbReference type="SUPFAM" id="SSF69742">
    <property type="entry name" value="Glutamyl tRNA-reductase catalytic, N-terminal domain"/>
    <property type="match status" value="1"/>
</dbReference>
<dbReference type="SUPFAM" id="SSF69075">
    <property type="entry name" value="Glutamyl tRNA-reductase dimerization domain"/>
    <property type="match status" value="1"/>
</dbReference>
<dbReference type="SUPFAM" id="SSF51735">
    <property type="entry name" value="NAD(P)-binding Rossmann-fold domains"/>
    <property type="match status" value="1"/>
</dbReference>
<dbReference type="PROSITE" id="PS00747">
    <property type="entry name" value="GLUTR"/>
    <property type="match status" value="1"/>
</dbReference>
<sequence>MDILLLGLNYKTAPVEIREKFTFSDDGTARALHLLSQTKSIAECIILGTCNRTEIYVVCDQANIGRDYTRRFLAEWFGVEKEQFKDHLYIKENEQAIEHLFRVSSGLDSMVMGETQILGQVRDAFLLGQEHQTTGTVFNTLFKQAITFAKRAHTETAIGQNAVSVSYAAVELGKKIFGSFAGKSVLIVGAGKMSELTAKHLHANGSERVMVANRTLERAQLLAEKFKGDSCTMEQLPEALLTADIVISSTGATGYVLGKKELAPIMKQRKHRPLFMVDIAVPRDLNPDLHDLDNVFLYDIDDLEGIVASNVAERSREAERLDVMIQEEIVAFTTWYQTLGVAPLIAALRDKANTIQSEAMRKIENKLPNLSEREMHIIRKTTKGIVNQLLHDPVVRLKEMAATKDGEEVLDIFEKMFALEEILERKEQEAIWANDKNKQTSSSREQVLVSRFPD</sequence>